<sequence>MPKQKIRIRLKAFDHAILDQSAQKIVETAKRTGAEVSGPIPLPTEKDIITILRAPHKYKDSREQFEIRTHKRLIDILNPTPKTVDALMRLDLPSGVDIEIKL</sequence>
<organism>
    <name type="scientific">Thermoanaerobacter pseudethanolicus (strain ATCC 33223 / 39E)</name>
    <name type="common">Clostridium thermohydrosulfuricum</name>
    <dbReference type="NCBI Taxonomy" id="340099"/>
    <lineage>
        <taxon>Bacteria</taxon>
        <taxon>Bacillati</taxon>
        <taxon>Bacillota</taxon>
        <taxon>Clostridia</taxon>
        <taxon>Thermoanaerobacterales</taxon>
        <taxon>Thermoanaerobacteraceae</taxon>
        <taxon>Thermoanaerobacter</taxon>
    </lineage>
</organism>
<protein>
    <recommendedName>
        <fullName evidence="1">Small ribosomal subunit protein uS10</fullName>
    </recommendedName>
    <alternativeName>
        <fullName evidence="2">30S ribosomal protein S10</fullName>
    </alternativeName>
</protein>
<gene>
    <name evidence="1" type="primary">rpsJ</name>
    <name type="ordered locus">Teth39_0373</name>
</gene>
<feature type="chain" id="PRO_1000127197" description="Small ribosomal subunit protein uS10">
    <location>
        <begin position="1"/>
        <end position="102"/>
    </location>
</feature>
<reference key="1">
    <citation type="submission" date="2008-01" db="EMBL/GenBank/DDBJ databases">
        <title>Complete sequence of Thermoanaerobacter pseudethanolicus 39E.</title>
        <authorList>
            <person name="Copeland A."/>
            <person name="Lucas S."/>
            <person name="Lapidus A."/>
            <person name="Barry K."/>
            <person name="Glavina del Rio T."/>
            <person name="Dalin E."/>
            <person name="Tice H."/>
            <person name="Pitluck S."/>
            <person name="Bruce D."/>
            <person name="Goodwin L."/>
            <person name="Saunders E."/>
            <person name="Brettin T."/>
            <person name="Detter J.C."/>
            <person name="Han C."/>
            <person name="Schmutz J."/>
            <person name="Larimer F."/>
            <person name="Land M."/>
            <person name="Hauser L."/>
            <person name="Kyrpides N."/>
            <person name="Lykidis A."/>
            <person name="Hemme C."/>
            <person name="Fields M.W."/>
            <person name="He Z."/>
            <person name="Zhou J."/>
            <person name="Richardson P."/>
        </authorList>
    </citation>
    <scope>NUCLEOTIDE SEQUENCE [LARGE SCALE GENOMIC DNA]</scope>
    <source>
        <strain>ATCC 33223 / DSM 2355 / 39E</strain>
    </source>
</reference>
<accession>B0KCJ9</accession>
<comment type="function">
    <text evidence="1">Involved in the binding of tRNA to the ribosomes.</text>
</comment>
<comment type="subunit">
    <text evidence="1">Part of the 30S ribosomal subunit.</text>
</comment>
<comment type="similarity">
    <text evidence="1">Belongs to the universal ribosomal protein uS10 family.</text>
</comment>
<keyword id="KW-1185">Reference proteome</keyword>
<keyword id="KW-0687">Ribonucleoprotein</keyword>
<keyword id="KW-0689">Ribosomal protein</keyword>
<name>RS10_THEP3</name>
<proteinExistence type="inferred from homology"/>
<evidence type="ECO:0000255" key="1">
    <source>
        <dbReference type="HAMAP-Rule" id="MF_00508"/>
    </source>
</evidence>
<evidence type="ECO:0000305" key="2"/>
<dbReference type="EMBL" id="CP000924">
    <property type="protein sequence ID" value="ABY94042.1"/>
    <property type="molecule type" value="Genomic_DNA"/>
</dbReference>
<dbReference type="RefSeq" id="WP_003868559.1">
    <property type="nucleotide sequence ID" value="NC_010321.1"/>
</dbReference>
<dbReference type="SMR" id="B0KCJ9"/>
<dbReference type="STRING" id="340099.Teth39_0373"/>
<dbReference type="KEGG" id="tpd:Teth39_0373"/>
<dbReference type="eggNOG" id="COG0051">
    <property type="taxonomic scope" value="Bacteria"/>
</dbReference>
<dbReference type="HOGENOM" id="CLU_122625_1_3_9"/>
<dbReference type="Proteomes" id="UP000002156">
    <property type="component" value="Chromosome"/>
</dbReference>
<dbReference type="GO" id="GO:1990904">
    <property type="term" value="C:ribonucleoprotein complex"/>
    <property type="evidence" value="ECO:0007669"/>
    <property type="project" value="UniProtKB-KW"/>
</dbReference>
<dbReference type="GO" id="GO:0005840">
    <property type="term" value="C:ribosome"/>
    <property type="evidence" value="ECO:0007669"/>
    <property type="project" value="UniProtKB-KW"/>
</dbReference>
<dbReference type="GO" id="GO:0003735">
    <property type="term" value="F:structural constituent of ribosome"/>
    <property type="evidence" value="ECO:0007669"/>
    <property type="project" value="InterPro"/>
</dbReference>
<dbReference type="GO" id="GO:0000049">
    <property type="term" value="F:tRNA binding"/>
    <property type="evidence" value="ECO:0007669"/>
    <property type="project" value="UniProtKB-UniRule"/>
</dbReference>
<dbReference type="GO" id="GO:0006412">
    <property type="term" value="P:translation"/>
    <property type="evidence" value="ECO:0007669"/>
    <property type="project" value="UniProtKB-UniRule"/>
</dbReference>
<dbReference type="FunFam" id="3.30.70.600:FF:000001">
    <property type="entry name" value="30S ribosomal protein S10"/>
    <property type="match status" value="1"/>
</dbReference>
<dbReference type="Gene3D" id="3.30.70.600">
    <property type="entry name" value="Ribosomal protein S10 domain"/>
    <property type="match status" value="1"/>
</dbReference>
<dbReference type="HAMAP" id="MF_00508">
    <property type="entry name" value="Ribosomal_uS10"/>
    <property type="match status" value="1"/>
</dbReference>
<dbReference type="InterPro" id="IPR001848">
    <property type="entry name" value="Ribosomal_uS10"/>
</dbReference>
<dbReference type="InterPro" id="IPR018268">
    <property type="entry name" value="Ribosomal_uS10_CS"/>
</dbReference>
<dbReference type="InterPro" id="IPR027486">
    <property type="entry name" value="Ribosomal_uS10_dom"/>
</dbReference>
<dbReference type="InterPro" id="IPR036838">
    <property type="entry name" value="Ribosomal_uS10_dom_sf"/>
</dbReference>
<dbReference type="NCBIfam" id="NF001861">
    <property type="entry name" value="PRK00596.1"/>
    <property type="match status" value="1"/>
</dbReference>
<dbReference type="NCBIfam" id="TIGR01049">
    <property type="entry name" value="rpsJ_bact"/>
    <property type="match status" value="1"/>
</dbReference>
<dbReference type="PANTHER" id="PTHR11700">
    <property type="entry name" value="30S RIBOSOMAL PROTEIN S10 FAMILY MEMBER"/>
    <property type="match status" value="1"/>
</dbReference>
<dbReference type="Pfam" id="PF00338">
    <property type="entry name" value="Ribosomal_S10"/>
    <property type="match status" value="1"/>
</dbReference>
<dbReference type="PRINTS" id="PR00971">
    <property type="entry name" value="RIBOSOMALS10"/>
</dbReference>
<dbReference type="SMART" id="SM01403">
    <property type="entry name" value="Ribosomal_S10"/>
    <property type="match status" value="1"/>
</dbReference>
<dbReference type="SUPFAM" id="SSF54999">
    <property type="entry name" value="Ribosomal protein S10"/>
    <property type="match status" value="1"/>
</dbReference>
<dbReference type="PROSITE" id="PS00361">
    <property type="entry name" value="RIBOSOMAL_S10"/>
    <property type="match status" value="1"/>
</dbReference>